<protein>
    <recommendedName>
        <fullName evidence="3">Sensory neuron membrane protein 1</fullName>
    </recommendedName>
</protein>
<comment type="function">
    <text evidence="3">Plays an olfactory role that is not restricted to pheromone sensitivity.</text>
</comment>
<comment type="subcellular location">
    <subcellularLocation>
        <location evidence="1">Cell membrane</location>
        <topology evidence="1">Multi-pass membrane protein</topology>
    </subcellularLocation>
</comment>
<comment type="similarity">
    <text evidence="6">Belongs to the CD36 family.</text>
</comment>
<organism>
    <name type="scientific">Drosophila persimilis</name>
    <name type="common">Fruit fly</name>
    <dbReference type="NCBI Taxonomy" id="7234"/>
    <lineage>
        <taxon>Eukaryota</taxon>
        <taxon>Metazoa</taxon>
        <taxon>Ecdysozoa</taxon>
        <taxon>Arthropoda</taxon>
        <taxon>Hexapoda</taxon>
        <taxon>Insecta</taxon>
        <taxon>Pterygota</taxon>
        <taxon>Neoptera</taxon>
        <taxon>Endopterygota</taxon>
        <taxon>Diptera</taxon>
        <taxon>Brachycera</taxon>
        <taxon>Muscomorpha</taxon>
        <taxon>Ephydroidea</taxon>
        <taxon>Drosophilidae</taxon>
        <taxon>Drosophila</taxon>
        <taxon>Sophophora</taxon>
    </lineage>
</organism>
<accession>B4GMC9</accession>
<name>SNMP1_DROPE</name>
<proteinExistence type="inferred from homology"/>
<sequence>MKLDRMKLLFVSAGTLVFAILFGWVMFPKILKFMISKQVTLKPGTDVRELWSNTPFPLHFYFYVFNVTNPEDVSQGGRPRLQEVGPFVFDEWKDKIDLVDDVVEDSVTFTMRNTFIFNAEASYPLTGEETITLPHPIMQPGGITVQRERAAMMELIAKAMSLVFPGAKAFLSATFMDLFFRGIDVDCSPDDFAAKALCTVFYTGEVKQAKQVNQTHFLFSFMGQANHSDAGRFTVCRGVKNNKKLGKVIRFAEETEMDVWPGDECNQFEGTDSTVFPPGLKKEEGLWAFTPDLCRSLGATYVRKSSYHGMPSTRYTLDLGDMRSEEKLHCFCDDPEDLETCPPRGTMNLAPCVGGPLLASMPHFYNGDPKLVAAVDGLHPNEKDHAVYIDFELMSGTPFQAAKRLQFNLDMEPVEGIEALKNLPKLILPLFWIEEGVHLNKTYTNMVKYTLFLGLKFNSGLRWTLITLSLVGLMSAAYLFYQNSDSLDITLPPKILKEVNKVADAAMNSKMFPEKAPTTPQTTIPGTNPPTNHGAQPPPAVASVPGISPPLSLKMEQTQRY</sequence>
<evidence type="ECO:0000250" key="1">
    <source>
        <dbReference type="UniProtKB" id="O02351"/>
    </source>
</evidence>
<evidence type="ECO:0000250" key="2">
    <source>
        <dbReference type="UniProtKB" id="P26201"/>
    </source>
</evidence>
<evidence type="ECO:0000250" key="3">
    <source>
        <dbReference type="UniProtKB" id="Q9VDD3"/>
    </source>
</evidence>
<evidence type="ECO:0000255" key="4"/>
<evidence type="ECO:0000256" key="5">
    <source>
        <dbReference type="SAM" id="MobiDB-lite"/>
    </source>
</evidence>
<evidence type="ECO:0000305" key="6"/>
<evidence type="ECO:0000312" key="7">
    <source>
        <dbReference type="EMBL" id="EDW38003.1"/>
    </source>
</evidence>
<dbReference type="EMBL" id="CH479185">
    <property type="protein sequence ID" value="EDW38003.1"/>
    <property type="molecule type" value="Genomic_DNA"/>
</dbReference>
<dbReference type="SMR" id="B4GMC9"/>
<dbReference type="STRING" id="7234.B4GMC9"/>
<dbReference type="GlyCosmos" id="B4GMC9">
    <property type="glycosylation" value="4 sites, No reported glycans"/>
</dbReference>
<dbReference type="EnsemblMetazoa" id="FBtr0177987">
    <property type="protein sequence ID" value="FBpp0176479"/>
    <property type="gene ID" value="FBgn0149979"/>
</dbReference>
<dbReference type="EnsemblMetazoa" id="XM_002019333.2">
    <property type="protein sequence ID" value="XP_002019369.1"/>
    <property type="gene ID" value="LOC6594539"/>
</dbReference>
<dbReference type="GeneID" id="6594539"/>
<dbReference type="KEGG" id="dpe:6594539"/>
<dbReference type="CTD" id="42514"/>
<dbReference type="eggNOG" id="KOG3776">
    <property type="taxonomic scope" value="Eukaryota"/>
</dbReference>
<dbReference type="HOGENOM" id="CLU_019853_1_2_1"/>
<dbReference type="OMA" id="QRKSSYH"/>
<dbReference type="OrthoDB" id="10024078at2759"/>
<dbReference type="PhylomeDB" id="B4GMC9"/>
<dbReference type="ChiTaRS" id="Snmp1">
    <property type="organism name" value="fly"/>
</dbReference>
<dbReference type="Proteomes" id="UP000008744">
    <property type="component" value="Unassembled WGS sequence"/>
</dbReference>
<dbReference type="GO" id="GO:0005929">
    <property type="term" value="C:cilium"/>
    <property type="evidence" value="ECO:0007669"/>
    <property type="project" value="EnsemblMetazoa"/>
</dbReference>
<dbReference type="GO" id="GO:0005737">
    <property type="term" value="C:cytoplasm"/>
    <property type="evidence" value="ECO:0007669"/>
    <property type="project" value="TreeGrafter"/>
</dbReference>
<dbReference type="GO" id="GO:0030425">
    <property type="term" value="C:dendrite"/>
    <property type="evidence" value="ECO:0007669"/>
    <property type="project" value="EnsemblMetazoa"/>
</dbReference>
<dbReference type="GO" id="GO:0043025">
    <property type="term" value="C:neuronal cell body"/>
    <property type="evidence" value="ECO:0007669"/>
    <property type="project" value="EnsemblMetazoa"/>
</dbReference>
<dbReference type="GO" id="GO:0005886">
    <property type="term" value="C:plasma membrane"/>
    <property type="evidence" value="ECO:0007669"/>
    <property type="project" value="UniProtKB-SubCell"/>
</dbReference>
<dbReference type="GO" id="GO:0005044">
    <property type="term" value="F:scavenger receptor activity"/>
    <property type="evidence" value="ECO:0007669"/>
    <property type="project" value="TreeGrafter"/>
</dbReference>
<dbReference type="GO" id="GO:0007166">
    <property type="term" value="P:cell surface receptor signaling pathway"/>
    <property type="evidence" value="ECO:0007669"/>
    <property type="project" value="EnsemblMetazoa"/>
</dbReference>
<dbReference type="GO" id="GO:0071444">
    <property type="term" value="P:cellular response to pheromone"/>
    <property type="evidence" value="ECO:0007669"/>
    <property type="project" value="EnsemblMetazoa"/>
</dbReference>
<dbReference type="GO" id="GO:0050911">
    <property type="term" value="P:detection of chemical stimulus involved in sensory perception of smell"/>
    <property type="evidence" value="ECO:0007669"/>
    <property type="project" value="EnsemblMetazoa"/>
</dbReference>
<dbReference type="GO" id="GO:0055088">
    <property type="term" value="P:lipid homeostasis"/>
    <property type="evidence" value="ECO:0007669"/>
    <property type="project" value="EnsemblMetazoa"/>
</dbReference>
<dbReference type="GO" id="GO:0035073">
    <property type="term" value="P:pupariation"/>
    <property type="evidence" value="ECO:0007669"/>
    <property type="project" value="EnsemblMetazoa"/>
</dbReference>
<dbReference type="InterPro" id="IPR002159">
    <property type="entry name" value="CD36_fam"/>
</dbReference>
<dbReference type="PANTHER" id="PTHR11923">
    <property type="entry name" value="SCAVENGER RECEPTOR CLASS B TYPE-1 SR-B1"/>
    <property type="match status" value="1"/>
</dbReference>
<dbReference type="PANTHER" id="PTHR11923:SF69">
    <property type="entry name" value="SENSORY NEURON MEMBRANE PROTEIN 1"/>
    <property type="match status" value="1"/>
</dbReference>
<dbReference type="Pfam" id="PF01130">
    <property type="entry name" value="CD36"/>
    <property type="match status" value="1"/>
</dbReference>
<dbReference type="PRINTS" id="PR01609">
    <property type="entry name" value="CD36FAMILY"/>
</dbReference>
<keyword id="KW-1003">Cell membrane</keyword>
<keyword id="KW-1015">Disulfide bond</keyword>
<keyword id="KW-0325">Glycoprotein</keyword>
<keyword id="KW-0472">Membrane</keyword>
<keyword id="KW-0552">Olfaction</keyword>
<keyword id="KW-0675">Receptor</keyword>
<keyword id="KW-1185">Reference proteome</keyword>
<keyword id="KW-0716">Sensory transduction</keyword>
<keyword id="KW-0812">Transmembrane</keyword>
<keyword id="KW-1133">Transmembrane helix</keyword>
<feature type="chain" id="PRO_0000408241" description="Sensory neuron membrane protein 1">
    <location>
        <begin position="1"/>
        <end position="561"/>
    </location>
</feature>
<feature type="topological domain" description="Cytoplasmic" evidence="4">
    <location>
        <begin position="1"/>
        <end position="7"/>
    </location>
</feature>
<feature type="transmembrane region" description="Helical" evidence="4">
    <location>
        <begin position="8"/>
        <end position="28"/>
    </location>
</feature>
<feature type="topological domain" description="Extracellular" evidence="4">
    <location>
        <begin position="29"/>
        <end position="459"/>
    </location>
</feature>
<feature type="transmembrane region" description="Helical" evidence="4">
    <location>
        <begin position="460"/>
        <end position="480"/>
    </location>
</feature>
<feature type="topological domain" description="Cytoplasmic" evidence="4">
    <location>
        <begin position="481"/>
        <end position="561"/>
    </location>
</feature>
<feature type="region of interest" description="Disordered" evidence="5">
    <location>
        <begin position="511"/>
        <end position="561"/>
    </location>
</feature>
<feature type="compositionally biased region" description="Polar residues" evidence="5">
    <location>
        <begin position="518"/>
        <end position="534"/>
    </location>
</feature>
<feature type="glycosylation site" description="N-linked (GlcNAc...) asparagine" evidence="4">
    <location>
        <position position="66"/>
    </location>
</feature>
<feature type="glycosylation site" description="N-linked (GlcNAc...) asparagine" evidence="4">
    <location>
        <position position="213"/>
    </location>
</feature>
<feature type="glycosylation site" description="N-linked (GlcNAc...) asparagine" evidence="4">
    <location>
        <position position="226"/>
    </location>
</feature>
<feature type="glycosylation site" description="N-linked (GlcNAc...) asparagine" evidence="4">
    <location>
        <position position="440"/>
    </location>
</feature>
<feature type="disulfide bond" evidence="2">
    <location>
        <begin position="265"/>
        <end position="330"/>
    </location>
</feature>
<feature type="disulfide bond" evidence="2">
    <location>
        <begin position="294"/>
        <end position="352"/>
    </location>
</feature>
<feature type="disulfide bond" evidence="2">
    <location>
        <begin position="332"/>
        <end position="341"/>
    </location>
</feature>
<gene>
    <name evidence="3" type="primary">Snmp1</name>
    <name type="ORF">GL12372</name>
</gene>
<reference evidence="7" key="1">
    <citation type="journal article" date="2007" name="Nature">
        <title>Evolution of genes and genomes on the Drosophila phylogeny.</title>
        <authorList>
            <consortium name="Drosophila 12 genomes consortium"/>
        </authorList>
    </citation>
    <scope>NUCLEOTIDE SEQUENCE [LARGE SCALE GENOMIC DNA]</scope>
    <source>
        <strain evidence="7">MSH-3 / Tucson 14011-0111.49</strain>
    </source>
</reference>